<keyword id="KW-0963">Cytoplasm</keyword>
<keyword id="KW-0275">Fatty acid biosynthesis</keyword>
<keyword id="KW-0276">Fatty acid metabolism</keyword>
<keyword id="KW-0444">Lipid biosynthesis</keyword>
<keyword id="KW-0443">Lipid metabolism</keyword>
<keyword id="KW-0460">Magnesium</keyword>
<keyword id="KW-0479">Metal-binding</keyword>
<keyword id="KW-0808">Transferase</keyword>
<organism>
    <name type="scientific">Yersinia pestis bv. Antiqua (strain Nepal516)</name>
    <dbReference type="NCBI Taxonomy" id="377628"/>
    <lineage>
        <taxon>Bacteria</taxon>
        <taxon>Pseudomonadati</taxon>
        <taxon>Pseudomonadota</taxon>
        <taxon>Gammaproteobacteria</taxon>
        <taxon>Enterobacterales</taxon>
        <taxon>Yersiniaceae</taxon>
        <taxon>Yersinia</taxon>
    </lineage>
</organism>
<dbReference type="EC" id="2.7.8.7" evidence="1"/>
<dbReference type="EMBL" id="CP000305">
    <property type="protein sequence ID" value="ABG17540.1"/>
    <property type="molecule type" value="Genomic_DNA"/>
</dbReference>
<dbReference type="EMBL" id="ACNQ01000008">
    <property type="protein sequence ID" value="EEO77646.1"/>
    <property type="molecule type" value="Genomic_DNA"/>
</dbReference>
<dbReference type="RefSeq" id="WP_002211568.1">
    <property type="nucleotide sequence ID" value="NZ_ACNQ01000008.1"/>
</dbReference>
<dbReference type="SMR" id="Q1CKE0"/>
<dbReference type="GeneID" id="57975883"/>
<dbReference type="KEGG" id="ypn:YPN_1210"/>
<dbReference type="HOGENOM" id="CLU_089696_3_1_6"/>
<dbReference type="Proteomes" id="UP000008936">
    <property type="component" value="Chromosome"/>
</dbReference>
<dbReference type="GO" id="GO:0005737">
    <property type="term" value="C:cytoplasm"/>
    <property type="evidence" value="ECO:0007669"/>
    <property type="project" value="UniProtKB-SubCell"/>
</dbReference>
<dbReference type="GO" id="GO:0008897">
    <property type="term" value="F:holo-[acyl-carrier-protein] synthase activity"/>
    <property type="evidence" value="ECO:0007669"/>
    <property type="project" value="UniProtKB-UniRule"/>
</dbReference>
<dbReference type="GO" id="GO:0000287">
    <property type="term" value="F:magnesium ion binding"/>
    <property type="evidence" value="ECO:0007669"/>
    <property type="project" value="UniProtKB-UniRule"/>
</dbReference>
<dbReference type="GO" id="GO:0006633">
    <property type="term" value="P:fatty acid biosynthetic process"/>
    <property type="evidence" value="ECO:0007669"/>
    <property type="project" value="UniProtKB-UniRule"/>
</dbReference>
<dbReference type="FunFam" id="3.90.470.20:FF:000001">
    <property type="entry name" value="Holo-[acyl-carrier-protein] synthase"/>
    <property type="match status" value="1"/>
</dbReference>
<dbReference type="Gene3D" id="3.90.470.20">
    <property type="entry name" value="4'-phosphopantetheinyl transferase domain"/>
    <property type="match status" value="1"/>
</dbReference>
<dbReference type="HAMAP" id="MF_00101">
    <property type="entry name" value="AcpS"/>
    <property type="match status" value="1"/>
</dbReference>
<dbReference type="InterPro" id="IPR008278">
    <property type="entry name" value="4-PPantetheinyl_Trfase_dom"/>
</dbReference>
<dbReference type="InterPro" id="IPR037143">
    <property type="entry name" value="4-PPantetheinyl_Trfase_dom_sf"/>
</dbReference>
<dbReference type="InterPro" id="IPR002582">
    <property type="entry name" value="ACPS"/>
</dbReference>
<dbReference type="InterPro" id="IPR004568">
    <property type="entry name" value="Ppantetheine-prot_Trfase_dom"/>
</dbReference>
<dbReference type="NCBIfam" id="TIGR00516">
    <property type="entry name" value="acpS"/>
    <property type="match status" value="1"/>
</dbReference>
<dbReference type="NCBIfam" id="TIGR00556">
    <property type="entry name" value="pantethn_trn"/>
    <property type="match status" value="1"/>
</dbReference>
<dbReference type="Pfam" id="PF01648">
    <property type="entry name" value="ACPS"/>
    <property type="match status" value="1"/>
</dbReference>
<dbReference type="SUPFAM" id="SSF56214">
    <property type="entry name" value="4'-phosphopantetheinyl transferase"/>
    <property type="match status" value="1"/>
</dbReference>
<feature type="chain" id="PRO_1000008527" description="Holo-[acyl-carrier-protein] synthase">
    <location>
        <begin position="1"/>
        <end position="126"/>
    </location>
</feature>
<feature type="binding site" evidence="1">
    <location>
        <position position="9"/>
    </location>
    <ligand>
        <name>Mg(2+)</name>
        <dbReference type="ChEBI" id="CHEBI:18420"/>
    </ligand>
</feature>
<feature type="binding site" evidence="1">
    <location>
        <position position="58"/>
    </location>
    <ligand>
        <name>Mg(2+)</name>
        <dbReference type="ChEBI" id="CHEBI:18420"/>
    </ligand>
</feature>
<protein>
    <recommendedName>
        <fullName evidence="1">Holo-[acyl-carrier-protein] synthase</fullName>
        <shortName evidence="1">Holo-ACP synthase</shortName>
        <ecNumber evidence="1">2.7.8.7</ecNumber>
    </recommendedName>
    <alternativeName>
        <fullName evidence="1">4'-phosphopantetheinyl transferase AcpS</fullName>
    </alternativeName>
</protein>
<comment type="function">
    <text evidence="1">Transfers the 4'-phosphopantetheine moiety from coenzyme A to a Ser of acyl-carrier-protein.</text>
</comment>
<comment type="catalytic activity">
    <reaction evidence="1">
        <text>apo-[ACP] + CoA = holo-[ACP] + adenosine 3',5'-bisphosphate + H(+)</text>
        <dbReference type="Rhea" id="RHEA:12068"/>
        <dbReference type="Rhea" id="RHEA-COMP:9685"/>
        <dbReference type="Rhea" id="RHEA-COMP:9690"/>
        <dbReference type="ChEBI" id="CHEBI:15378"/>
        <dbReference type="ChEBI" id="CHEBI:29999"/>
        <dbReference type="ChEBI" id="CHEBI:57287"/>
        <dbReference type="ChEBI" id="CHEBI:58343"/>
        <dbReference type="ChEBI" id="CHEBI:64479"/>
        <dbReference type="EC" id="2.7.8.7"/>
    </reaction>
</comment>
<comment type="cofactor">
    <cofactor evidence="1">
        <name>Mg(2+)</name>
        <dbReference type="ChEBI" id="CHEBI:18420"/>
    </cofactor>
</comment>
<comment type="subcellular location">
    <subcellularLocation>
        <location evidence="1">Cytoplasm</location>
    </subcellularLocation>
</comment>
<comment type="similarity">
    <text evidence="1">Belongs to the P-Pant transferase superfamily. AcpS family.</text>
</comment>
<gene>
    <name evidence="1" type="primary">acpS</name>
    <name type="ordered locus">YPN_1210</name>
    <name type="ORF">YP516_1323</name>
</gene>
<name>ACPS_YERPN</name>
<evidence type="ECO:0000255" key="1">
    <source>
        <dbReference type="HAMAP-Rule" id="MF_00101"/>
    </source>
</evidence>
<accession>Q1CKE0</accession>
<accession>C4GRF5</accession>
<proteinExistence type="inferred from homology"/>
<reference key="1">
    <citation type="journal article" date="2006" name="J. Bacteriol.">
        <title>Complete genome sequence of Yersinia pestis strains Antiqua and Nepal516: evidence of gene reduction in an emerging pathogen.</title>
        <authorList>
            <person name="Chain P.S.G."/>
            <person name="Hu P."/>
            <person name="Malfatti S.A."/>
            <person name="Radnedge L."/>
            <person name="Larimer F."/>
            <person name="Vergez L.M."/>
            <person name="Worsham P."/>
            <person name="Chu M.C."/>
            <person name="Andersen G.L."/>
        </authorList>
    </citation>
    <scope>NUCLEOTIDE SEQUENCE [LARGE SCALE GENOMIC DNA]</scope>
    <source>
        <strain>Nepal516</strain>
    </source>
</reference>
<reference key="2">
    <citation type="submission" date="2009-04" db="EMBL/GenBank/DDBJ databases">
        <title>Yersinia pestis Nepal516A whole genome shotgun sequencing project.</title>
        <authorList>
            <person name="Plunkett G. III"/>
            <person name="Anderson B.D."/>
            <person name="Baumler D.J."/>
            <person name="Burland V."/>
            <person name="Cabot E.L."/>
            <person name="Glasner J.D."/>
            <person name="Mau B."/>
            <person name="Neeno-Eckwall E."/>
            <person name="Perna N.T."/>
            <person name="Munk A.C."/>
            <person name="Tapia R."/>
            <person name="Green L.D."/>
            <person name="Rogers Y.C."/>
            <person name="Detter J.C."/>
            <person name="Bruce D.C."/>
            <person name="Brettin T.S."/>
        </authorList>
    </citation>
    <scope>NUCLEOTIDE SEQUENCE [LARGE SCALE GENOMIC DNA]</scope>
    <source>
        <strain>Nepal516</strain>
    </source>
</reference>
<sequence length="126" mass="13992">MAILGLGTDIVEISRIQAVVERTGERLARRILSPSEWQHYQQHQQPVRFLAKRFAVKEAAAKAFGTGIRNGLAFNQFEVVNDALGKPTLRLHSRAAELAVELGVKSLHVTLADERRYACATVIIES</sequence>